<protein>
    <recommendedName>
        <fullName evidence="10">CCR4-Not complex 3'-5'-exoribonuclease subunit Ccr4</fullName>
        <ecNumber>3.1.13.4</ecNumber>
    </recommendedName>
    <alternativeName>
        <fullName>Carbon catabolite repressor protein 4</fullName>
    </alternativeName>
    <alternativeName>
        <fullName>Cytoplasmic deadenylase</fullName>
    </alternativeName>
    <alternativeName>
        <fullName>Glucose-repressible alcohol dehydrogenase transcriptional effector</fullName>
    </alternativeName>
</protein>
<organism>
    <name type="scientific">Saccharomyces cerevisiae (strain ATCC 204508 / S288c)</name>
    <name type="common">Baker's yeast</name>
    <dbReference type="NCBI Taxonomy" id="559292"/>
    <lineage>
        <taxon>Eukaryota</taxon>
        <taxon>Fungi</taxon>
        <taxon>Dikarya</taxon>
        <taxon>Ascomycota</taxon>
        <taxon>Saccharomycotina</taxon>
        <taxon>Saccharomycetes</taxon>
        <taxon>Saccharomycetales</taxon>
        <taxon>Saccharomycetaceae</taxon>
        <taxon>Saccharomyces</taxon>
    </lineage>
</organism>
<gene>
    <name type="primary">CCR4</name>
    <name type="ordered locus">YAL021C</name>
    <name type="ORF">FUN27</name>
</gene>
<feature type="chain" id="PRO_0000218577" description="CCR4-Not complex 3'-5'-exoribonuclease subunit Ccr4">
    <location>
        <begin position="1"/>
        <end position="837"/>
    </location>
</feature>
<feature type="repeat" description="LRR 1">
    <location>
        <begin position="334"/>
        <end position="356"/>
    </location>
</feature>
<feature type="repeat" description="LRR 2">
    <location>
        <begin position="358"/>
        <end position="379"/>
    </location>
</feature>
<feature type="repeat" description="LRR 3">
    <location>
        <begin position="381"/>
        <end position="402"/>
    </location>
</feature>
<feature type="repeat" description="LRR 4">
    <location>
        <begin position="404"/>
        <end position="426"/>
    </location>
</feature>
<feature type="repeat" description="LRR 5">
    <location>
        <begin position="427"/>
        <end position="447"/>
    </location>
</feature>
<feature type="region of interest" description="Disordered" evidence="2">
    <location>
        <begin position="1"/>
        <end position="32"/>
    </location>
</feature>
<feature type="region of interest" description="Disordered" evidence="2">
    <location>
        <begin position="46"/>
        <end position="66"/>
    </location>
</feature>
<feature type="region of interest" description="Disordered" evidence="2">
    <location>
        <begin position="81"/>
        <end position="107"/>
    </location>
</feature>
<feature type="region of interest" description="Disordered" evidence="2">
    <location>
        <begin position="197"/>
        <end position="223"/>
    </location>
</feature>
<feature type="region of interest" description="Disordered" evidence="2">
    <location>
        <begin position="254"/>
        <end position="281"/>
    </location>
</feature>
<feature type="compositionally biased region" description="Low complexity" evidence="2">
    <location>
        <begin position="15"/>
        <end position="24"/>
    </location>
</feature>
<feature type="compositionally biased region" description="Polar residues" evidence="2">
    <location>
        <begin position="55"/>
        <end position="66"/>
    </location>
</feature>
<feature type="compositionally biased region" description="Low complexity" evidence="2">
    <location>
        <begin position="81"/>
        <end position="102"/>
    </location>
</feature>
<feature type="compositionally biased region" description="Low complexity" evidence="2">
    <location>
        <begin position="197"/>
        <end position="209"/>
    </location>
</feature>
<feature type="compositionally biased region" description="Pro residues" evidence="2">
    <location>
        <begin position="210"/>
        <end position="222"/>
    </location>
</feature>
<feature type="binding site" evidence="1">
    <location>
        <position position="556"/>
    </location>
    <ligand>
        <name>Mg(2+)</name>
        <dbReference type="ChEBI" id="CHEBI:18420"/>
    </ligand>
</feature>
<feature type="modified residue" description="Phosphothreonine" evidence="13">
    <location>
        <position position="33"/>
    </location>
</feature>
<feature type="modified residue" description="Phosphoserine" evidence="12 13">
    <location>
        <position position="278"/>
    </location>
</feature>
<feature type="modified residue" description="Phosphothreonine" evidence="11 13">
    <location>
        <position position="285"/>
    </location>
</feature>
<feature type="mutagenesis site" description="Loss of activity." evidence="6">
    <original>E</original>
    <variation>A</variation>
    <location>
        <position position="556"/>
    </location>
</feature>
<feature type="mutagenesis site" description="Strongly reduces activity." evidence="6">
    <original>D</original>
    <variation>A</variation>
    <location>
        <position position="713"/>
    </location>
</feature>
<feature type="mutagenesis site" description="Reduces activity." evidence="6">
    <original>D</original>
    <variation>A</variation>
    <location>
        <position position="780"/>
    </location>
</feature>
<feature type="mutagenesis site" description="Loss of activity." evidence="6">
    <original>H</original>
    <variation>A</variation>
    <location>
        <position position="818"/>
    </location>
</feature>
<feature type="sequence conflict" description="In Ref. 1; AAB24455." evidence="10" ref="1">
    <original>I</original>
    <variation>L</variation>
    <location>
        <position position="544"/>
    </location>
</feature>
<feature type="sequence conflict" description="In Ref. 1; AAB24455." evidence="10" ref="1">
    <original>V</original>
    <variation>E</variation>
    <location>
        <position position="803"/>
    </location>
</feature>
<feature type="turn" evidence="14">
    <location>
        <begin position="140"/>
        <end position="142"/>
    </location>
</feature>
<feature type="helix" evidence="14">
    <location>
        <begin position="144"/>
        <end position="146"/>
    </location>
</feature>
<feature type="helix" evidence="14">
    <location>
        <begin position="155"/>
        <end position="169"/>
    </location>
</feature>
<feature type="helix" evidence="14">
    <location>
        <begin position="176"/>
        <end position="186"/>
    </location>
</feature>
<feature type="helix" evidence="14">
    <location>
        <begin position="245"/>
        <end position="258"/>
    </location>
</feature>
<feature type="strand" evidence="14">
    <location>
        <begin position="338"/>
        <end position="340"/>
    </location>
</feature>
<feature type="helix" evidence="14">
    <location>
        <begin position="351"/>
        <end position="355"/>
    </location>
</feature>
<feature type="helix" evidence="14">
    <location>
        <begin position="374"/>
        <end position="379"/>
    </location>
</feature>
<feature type="strand" evidence="14">
    <location>
        <begin position="384"/>
        <end position="386"/>
    </location>
</feature>
<feature type="helix" evidence="14">
    <location>
        <begin position="399"/>
        <end position="402"/>
    </location>
</feature>
<feature type="strand" evidence="14">
    <location>
        <begin position="406"/>
        <end position="409"/>
    </location>
</feature>
<feature type="helix" evidence="14">
    <location>
        <begin position="441"/>
        <end position="460"/>
    </location>
</feature>
<feature type="helix" evidence="14">
    <location>
        <begin position="515"/>
        <end position="517"/>
    </location>
</feature>
<feature type="turn" evidence="14">
    <location>
        <begin position="520"/>
        <end position="522"/>
    </location>
</feature>
<feature type="helix" evidence="14">
    <location>
        <begin position="528"/>
        <end position="531"/>
    </location>
</feature>
<feature type="helix" evidence="14">
    <location>
        <begin position="533"/>
        <end position="546"/>
    </location>
</feature>
<feature type="strand" evidence="14">
    <location>
        <begin position="550"/>
        <end position="554"/>
    </location>
</feature>
<feature type="helix" evidence="14">
    <location>
        <begin position="559"/>
        <end position="563"/>
    </location>
</feature>
<feature type="turn" evidence="14">
    <location>
        <begin position="564"/>
        <end position="566"/>
    </location>
</feature>
<feature type="strand" evidence="14">
    <location>
        <begin position="600"/>
        <end position="602"/>
    </location>
</feature>
<feature type="helix" evidence="14">
    <location>
        <begin position="800"/>
        <end position="803"/>
    </location>
</feature>
<feature type="strand" evidence="14">
    <location>
        <begin position="807"/>
        <end position="811"/>
    </location>
</feature>
<feature type="strand" evidence="14">
    <location>
        <begin position="816"/>
        <end position="818"/>
    </location>
</feature>
<dbReference type="EC" id="3.1.13.4"/>
<dbReference type="EMBL" id="S50459">
    <property type="protein sequence ID" value="AAB24455.1"/>
    <property type="molecule type" value="Genomic_DNA"/>
</dbReference>
<dbReference type="EMBL" id="L05146">
    <property type="protein sequence ID" value="AAC04936.1"/>
    <property type="molecule type" value="Genomic_DNA"/>
</dbReference>
<dbReference type="EMBL" id="BK006935">
    <property type="protein sequence ID" value="DAA06967.1"/>
    <property type="molecule type" value="Genomic_DNA"/>
</dbReference>
<dbReference type="PIR" id="S36713">
    <property type="entry name" value="S36713"/>
</dbReference>
<dbReference type="RefSeq" id="NP_009381.1">
    <property type="nucleotide sequence ID" value="NM_001178166.1"/>
</dbReference>
<dbReference type="PDB" id="4B8C">
    <property type="method" value="X-ray"/>
    <property type="resolution" value="3.41 A"/>
    <property type="chains" value="D/J/K/L=111-837"/>
</dbReference>
<dbReference type="PDBsum" id="4B8C"/>
<dbReference type="SMR" id="P31384"/>
<dbReference type="BioGRID" id="31745">
    <property type="interactions" value="3176"/>
</dbReference>
<dbReference type="ComplexPortal" id="CPX-1800">
    <property type="entry name" value="CCR4-NOT mRNA deadenylase complex"/>
</dbReference>
<dbReference type="DIP" id="DIP-2522N"/>
<dbReference type="FunCoup" id="P31384">
    <property type="interactions" value="558"/>
</dbReference>
<dbReference type="IntAct" id="P31384">
    <property type="interactions" value="57"/>
</dbReference>
<dbReference type="MINT" id="P31384"/>
<dbReference type="STRING" id="4932.YAL021C"/>
<dbReference type="CarbonylDB" id="P31384"/>
<dbReference type="iPTMnet" id="P31384"/>
<dbReference type="PaxDb" id="4932-YAL021C"/>
<dbReference type="PeptideAtlas" id="P31384"/>
<dbReference type="TopDownProteomics" id="P31384"/>
<dbReference type="EnsemblFungi" id="YAL021C_mRNA">
    <property type="protein sequence ID" value="YAL021C"/>
    <property type="gene ID" value="YAL021C"/>
</dbReference>
<dbReference type="GeneID" id="851212"/>
<dbReference type="KEGG" id="sce:YAL021C"/>
<dbReference type="AGR" id="SGD:S000000019"/>
<dbReference type="SGD" id="S000000019">
    <property type="gene designation" value="CCR4"/>
</dbReference>
<dbReference type="VEuPathDB" id="FungiDB:YAL021C"/>
<dbReference type="eggNOG" id="KOG0620">
    <property type="taxonomic scope" value="Eukaryota"/>
</dbReference>
<dbReference type="GeneTree" id="ENSGT00940000169297"/>
<dbReference type="HOGENOM" id="CLU_016428_4_1_1"/>
<dbReference type="InParanoid" id="P31384"/>
<dbReference type="OMA" id="EHRMVAP"/>
<dbReference type="OrthoDB" id="428734at2759"/>
<dbReference type="BioCyc" id="YEAST:G3O-28833-MONOMER"/>
<dbReference type="BioGRID-ORCS" id="851212">
    <property type="hits" value="10 hits in 10 CRISPR screens"/>
</dbReference>
<dbReference type="EvolutionaryTrace" id="P31384"/>
<dbReference type="PRO" id="PR:P31384"/>
<dbReference type="Proteomes" id="UP000002311">
    <property type="component" value="Chromosome I"/>
</dbReference>
<dbReference type="RNAct" id="P31384">
    <property type="molecule type" value="protein"/>
</dbReference>
<dbReference type="GO" id="GO:0030015">
    <property type="term" value="C:CCR4-NOT core complex"/>
    <property type="evidence" value="ECO:0000314"/>
    <property type="project" value="SGD"/>
</dbReference>
<dbReference type="GO" id="GO:0016593">
    <property type="term" value="C:Cdc73/Paf1 complex"/>
    <property type="evidence" value="ECO:0000353"/>
    <property type="project" value="SGD"/>
</dbReference>
<dbReference type="GO" id="GO:0005737">
    <property type="term" value="C:cytoplasm"/>
    <property type="evidence" value="ECO:0000314"/>
    <property type="project" value="SGD"/>
</dbReference>
<dbReference type="GO" id="GO:0000932">
    <property type="term" value="C:P-body"/>
    <property type="evidence" value="ECO:0000314"/>
    <property type="project" value="SGD"/>
</dbReference>
<dbReference type="GO" id="GO:0000175">
    <property type="term" value="F:3'-5'-RNA exonuclease activity"/>
    <property type="evidence" value="ECO:0000314"/>
    <property type="project" value="SGD"/>
</dbReference>
<dbReference type="GO" id="GO:0046872">
    <property type="term" value="F:metal ion binding"/>
    <property type="evidence" value="ECO:0007669"/>
    <property type="project" value="UniProtKB-KW"/>
</dbReference>
<dbReference type="GO" id="GO:0004535">
    <property type="term" value="F:poly(A)-specific ribonuclease activity"/>
    <property type="evidence" value="ECO:0007669"/>
    <property type="project" value="UniProtKB-EC"/>
</dbReference>
<dbReference type="GO" id="GO:0003723">
    <property type="term" value="F:RNA binding"/>
    <property type="evidence" value="ECO:0007669"/>
    <property type="project" value="UniProtKB-KW"/>
</dbReference>
<dbReference type="GO" id="GO:0006260">
    <property type="term" value="P:DNA replication"/>
    <property type="evidence" value="ECO:0000316"/>
    <property type="project" value="SGD"/>
</dbReference>
<dbReference type="GO" id="GO:0000076">
    <property type="term" value="P:DNA replication checkpoint signaling"/>
    <property type="evidence" value="ECO:0000316"/>
    <property type="project" value="SGD"/>
</dbReference>
<dbReference type="GO" id="GO:0000288">
    <property type="term" value="P:nuclear-transcribed mRNA catabolic process, deadenylation-dependent decay"/>
    <property type="evidence" value="ECO:0000314"/>
    <property type="project" value="SGD"/>
</dbReference>
<dbReference type="GO" id="GO:0000289">
    <property type="term" value="P:nuclear-transcribed mRNA poly(A) tail shortening"/>
    <property type="evidence" value="ECO:0000314"/>
    <property type="project" value="SGD"/>
</dbReference>
<dbReference type="GO" id="GO:0032968">
    <property type="term" value="P:positive regulation of transcription elongation by RNA polymerase II"/>
    <property type="evidence" value="ECO:0000314"/>
    <property type="project" value="ComplexPortal"/>
</dbReference>
<dbReference type="GO" id="GO:0006357">
    <property type="term" value="P:regulation of transcription by RNA polymerase II"/>
    <property type="evidence" value="ECO:0000353"/>
    <property type="project" value="SGD"/>
</dbReference>
<dbReference type="GO" id="GO:0006368">
    <property type="term" value="P:transcription elongation by RNA polymerase II"/>
    <property type="evidence" value="ECO:0000315"/>
    <property type="project" value="SGD"/>
</dbReference>
<dbReference type="GO" id="GO:0007089">
    <property type="term" value="P:traversing start control point of mitotic cell cycle"/>
    <property type="evidence" value="ECO:0000315"/>
    <property type="project" value="SGD"/>
</dbReference>
<dbReference type="FunFam" id="3.80.10.10:FF:000754">
    <property type="entry name" value="CCR4-NOT transcriptional complex subunit"/>
    <property type="match status" value="1"/>
</dbReference>
<dbReference type="FunFam" id="3.60.10.10:FF:000037">
    <property type="entry name" value="Glucose-repressible alcohol dehydrogenase transcriptional effector"/>
    <property type="match status" value="1"/>
</dbReference>
<dbReference type="FunFam" id="3.80.10.10:FF:000598">
    <property type="entry name" value="Glucose-repressible alcohol dehydrogenase transcriptional effector"/>
    <property type="match status" value="1"/>
</dbReference>
<dbReference type="Gene3D" id="3.60.10.10">
    <property type="entry name" value="Endonuclease/exonuclease/phosphatase"/>
    <property type="match status" value="1"/>
</dbReference>
<dbReference type="Gene3D" id="3.80.10.10">
    <property type="entry name" value="Ribonuclease Inhibitor"/>
    <property type="match status" value="2"/>
</dbReference>
<dbReference type="InterPro" id="IPR050410">
    <property type="entry name" value="CCR4/nocturin_mRNA_transcr"/>
</dbReference>
<dbReference type="InterPro" id="IPR036691">
    <property type="entry name" value="Endo/exonu/phosph_ase_sf"/>
</dbReference>
<dbReference type="InterPro" id="IPR005135">
    <property type="entry name" value="Endo/exonuclease/phosphatase"/>
</dbReference>
<dbReference type="InterPro" id="IPR001611">
    <property type="entry name" value="Leu-rich_rpt"/>
</dbReference>
<dbReference type="InterPro" id="IPR003591">
    <property type="entry name" value="Leu-rich_rpt_typical-subtyp"/>
</dbReference>
<dbReference type="InterPro" id="IPR032675">
    <property type="entry name" value="LRR_dom_sf"/>
</dbReference>
<dbReference type="PANTHER" id="PTHR12121">
    <property type="entry name" value="CARBON CATABOLITE REPRESSOR PROTEIN 4"/>
    <property type="match status" value="1"/>
</dbReference>
<dbReference type="PANTHER" id="PTHR12121:SF100">
    <property type="entry name" value="POLY(A)-SPECIFIC RIBONUCLEASE"/>
    <property type="match status" value="1"/>
</dbReference>
<dbReference type="Pfam" id="PF03372">
    <property type="entry name" value="Exo_endo_phos"/>
    <property type="match status" value="1"/>
</dbReference>
<dbReference type="Pfam" id="PF13855">
    <property type="entry name" value="LRR_8"/>
    <property type="match status" value="1"/>
</dbReference>
<dbReference type="SMART" id="SM00369">
    <property type="entry name" value="LRR_TYP"/>
    <property type="match status" value="2"/>
</dbReference>
<dbReference type="SUPFAM" id="SSF56219">
    <property type="entry name" value="DNase I-like"/>
    <property type="match status" value="1"/>
</dbReference>
<dbReference type="SUPFAM" id="SSF52058">
    <property type="entry name" value="L domain-like"/>
    <property type="match status" value="1"/>
</dbReference>
<dbReference type="PROSITE" id="PS51450">
    <property type="entry name" value="LRR"/>
    <property type="match status" value="2"/>
</dbReference>
<reference key="1">
    <citation type="journal article" date="1992" name="Genetics">
        <title>The CCR4 protein from Saccharomyces cerevisiae contains a leucine-rich repeat region which is required for its control of ADH2 gene expression.</title>
        <authorList>
            <person name="Malvar T."/>
            <person name="Biron R.W."/>
            <person name="Kaback D.B."/>
            <person name="Denis C.L."/>
        </authorList>
    </citation>
    <scope>NUCLEOTIDE SEQUENCE [GENOMIC DNA]</scope>
</reference>
<reference key="2">
    <citation type="journal article" date="1993" name="Genome">
        <title>Sequencing of chromosome I from Saccharomyces cerevisiae: analysis of a 32 kb region between the LTE1 and SPO7 genes.</title>
        <authorList>
            <person name="Ouellette B.F.F."/>
            <person name="Clark M.W."/>
            <person name="Keng T."/>
            <person name="Storms R.K."/>
            <person name="Zhong W.-W."/>
            <person name="Zeng B."/>
            <person name="Fortin N."/>
            <person name="Delaney S."/>
            <person name="Barton A.B."/>
            <person name="Kaback D.B."/>
            <person name="Bussey H."/>
        </authorList>
    </citation>
    <scope>NUCLEOTIDE SEQUENCE [GENOMIC DNA]</scope>
    <source>
        <strain>ATCC 204511 / S288c / AB972</strain>
    </source>
</reference>
<reference key="3">
    <citation type="journal article" date="1994" name="J. Bacteriol.">
        <title>Molecular cloning of chromosome I DNA from Saccharomyces cerevisiae: analysis of the genes in the FUN38-MAK16-SPO7 region.</title>
        <authorList>
            <person name="Barton A.B."/>
            <person name="Kaback D.B."/>
        </authorList>
    </citation>
    <scope>NUCLEOTIDE SEQUENCE [GENOMIC DNA]</scope>
    <source>
        <strain>ATCC 204511 / S288c / AB972</strain>
    </source>
</reference>
<reference key="4">
    <citation type="journal article" date="1995" name="Proc. Natl. Acad. Sci. U.S.A.">
        <title>The nucleotide sequence of chromosome I from Saccharomyces cerevisiae.</title>
        <authorList>
            <person name="Bussey H."/>
            <person name="Kaback D.B."/>
            <person name="Zhong W.-W."/>
            <person name="Vo D.H."/>
            <person name="Clark M.W."/>
            <person name="Fortin N."/>
            <person name="Hall J."/>
            <person name="Ouellette B.F.F."/>
            <person name="Keng T."/>
            <person name="Barton A.B."/>
            <person name="Su Y."/>
            <person name="Davies C.J."/>
            <person name="Storms R.K."/>
        </authorList>
    </citation>
    <scope>NUCLEOTIDE SEQUENCE [LARGE SCALE GENOMIC DNA]</scope>
    <source>
        <strain>ATCC 204508 / S288c</strain>
    </source>
</reference>
<reference key="5">
    <citation type="journal article" date="2014" name="G3 (Bethesda)">
        <title>The reference genome sequence of Saccharomyces cerevisiae: Then and now.</title>
        <authorList>
            <person name="Engel S.R."/>
            <person name="Dietrich F.S."/>
            <person name="Fisk D.G."/>
            <person name="Binkley G."/>
            <person name="Balakrishnan R."/>
            <person name="Costanzo M.C."/>
            <person name="Dwight S.S."/>
            <person name="Hitz B.C."/>
            <person name="Karra K."/>
            <person name="Nash R.S."/>
            <person name="Weng S."/>
            <person name="Wong E.D."/>
            <person name="Lloyd P."/>
            <person name="Skrzypek M.S."/>
            <person name="Miyasato S.R."/>
            <person name="Simison M."/>
            <person name="Cherry J.M."/>
        </authorList>
    </citation>
    <scope>GENOME REANNOTATION</scope>
    <source>
        <strain>ATCC 204508 / S288c</strain>
    </source>
</reference>
<reference key="6">
    <citation type="journal article" date="1998" name="EMBO J.">
        <title>The NOT proteins are part of the CCR4 transcriptional complex and affect gene expression both positively and negatively.</title>
        <authorList>
            <person name="Liu H.Y."/>
            <person name="Badarinarayana V."/>
            <person name="Audino D.C."/>
            <person name="Rappsilber J."/>
            <person name="Mann M."/>
            <person name="Denis C.L."/>
        </authorList>
    </citation>
    <scope>IDENTIFICATION IN THE CCR4-NOT CORE COMPLEX</scope>
    <scope>FUNCTION OF THE CCR4-NOT CORE COMPLEX IN TRANSCRIPTIONAL REGULATION</scope>
</reference>
<reference key="7">
    <citation type="journal article" date="1999" name="Mol. Cell. Biol.">
        <title>The CCR4 and CAF1 proteins of the CCR4-NOT complex are physically and functionally separated from NOT2, NOT4, and NOT5.</title>
        <authorList>
            <person name="Bai Y."/>
            <person name="Salvadore C."/>
            <person name="Chiang Y.C."/>
            <person name="Collart M.A."/>
            <person name="Liu H.Y."/>
            <person name="Denis C.L."/>
        </authorList>
    </citation>
    <scope>INTERACTION WITH NOT1</scope>
</reference>
<reference key="8">
    <citation type="journal article" date="2001" name="Cell">
        <title>The transcription factor associated Ccr4 and Caf1 proteins are components of the major cytoplasmic mRNA deadenylase in Saccharomyces cerevisiae.</title>
        <authorList>
            <person name="Tucker M."/>
            <person name="Valencia-Sanchez M.A."/>
            <person name="Staples R.R."/>
            <person name="Chen J."/>
            <person name="Denis C.L."/>
            <person name="Parker R."/>
        </authorList>
    </citation>
    <scope>FUNCTION IN MRNA DEADENYLATION</scope>
    <scope>SUBCELLULAR LOCATION</scope>
</reference>
<reference key="9">
    <citation type="journal article" date="2001" name="J. Mol. Biol.">
        <title>Purification and characterization of the 1.0 MDa CCR4-NOT complex identifies two novel components of the complex.</title>
        <authorList>
            <person name="Chen J."/>
            <person name="Rappsilber J."/>
            <person name="Chiang Y.C."/>
            <person name="Russell P."/>
            <person name="Mann M."/>
            <person name="Denis C.L."/>
        </authorList>
    </citation>
    <scope>IDENTIFICATION IN THE CCR4-NOT CORE COMPLEX</scope>
</reference>
<reference key="10">
    <citation type="journal article" date="2002" name="EMBO J.">
        <title>CCR4, a 3'-5' poly(A) RNA and ssDNA exonuclease, is the catalytic component of the cytoplasmic deadenylase.</title>
        <authorList>
            <person name="Chen J."/>
            <person name="Chiang Y.-C."/>
            <person name="Denis C.L."/>
        </authorList>
    </citation>
    <scope>FUNCTION IN MRNA DEADENYLATION</scope>
    <scope>MUTAGENESIS OF GLU-556; ASP-713; ASP-780 AND HIS-818</scope>
</reference>
<reference key="11">
    <citation type="journal article" date="2002" name="EMBO J.">
        <title>Ccr4p is the catalytic subunit of a Ccr4p/Pop2p/Notp mRNA deadenylase complex in Saccharomyces cerevisiae.</title>
        <authorList>
            <person name="Tucker M."/>
            <person name="Staples R.R."/>
            <person name="Valencia-Sanchez M.A."/>
            <person name="Muhlrad D."/>
            <person name="Parker R."/>
        </authorList>
    </citation>
    <scope>FUNCTION IN MRNA DEADENYLATION</scope>
</reference>
<reference key="12">
    <citation type="journal article" date="2003" name="Nature">
        <title>Global analysis of protein expression in yeast.</title>
        <authorList>
            <person name="Ghaemmaghami S."/>
            <person name="Huh W.-K."/>
            <person name="Bower K."/>
            <person name="Howson R.W."/>
            <person name="Belle A."/>
            <person name="Dephoure N."/>
            <person name="O'Shea E.K."/>
            <person name="Weissman J.S."/>
        </authorList>
    </citation>
    <scope>LEVEL OF PROTEIN EXPRESSION [LARGE SCALE ANALYSIS]</scope>
</reference>
<reference key="13">
    <citation type="journal article" date="2007" name="J. Proteome Res.">
        <title>Large-scale phosphorylation analysis of alpha-factor-arrested Saccharomyces cerevisiae.</title>
        <authorList>
            <person name="Li X."/>
            <person name="Gerber S.A."/>
            <person name="Rudner A.D."/>
            <person name="Beausoleil S.A."/>
            <person name="Haas W."/>
            <person name="Villen J."/>
            <person name="Elias J.E."/>
            <person name="Gygi S.P."/>
        </authorList>
    </citation>
    <scope>PHOSPHORYLATION [LARGE SCALE ANALYSIS] AT THR-285</scope>
    <scope>IDENTIFICATION BY MASS SPECTROMETRY [LARGE SCALE ANALYSIS]</scope>
    <source>
        <strain>ADR376</strain>
    </source>
</reference>
<reference key="14">
    <citation type="journal article" date="2008" name="Mol. Cell. Proteomics">
        <title>A multidimensional chromatography technology for in-depth phosphoproteome analysis.</title>
        <authorList>
            <person name="Albuquerque C.P."/>
            <person name="Smolka M.B."/>
            <person name="Payne S.H."/>
            <person name="Bafna V."/>
            <person name="Eng J."/>
            <person name="Zhou H."/>
        </authorList>
    </citation>
    <scope>PHOSPHORYLATION [LARGE SCALE ANALYSIS] AT SER-278</scope>
    <scope>IDENTIFICATION BY MASS SPECTROMETRY [LARGE SCALE ANALYSIS]</scope>
</reference>
<reference key="15">
    <citation type="journal article" date="2009" name="Science">
        <title>Global analysis of Cdk1 substrate phosphorylation sites provides insights into evolution.</title>
        <authorList>
            <person name="Holt L.J."/>
            <person name="Tuch B.B."/>
            <person name="Villen J."/>
            <person name="Johnson A.D."/>
            <person name="Gygi S.P."/>
            <person name="Morgan D.O."/>
        </authorList>
    </citation>
    <scope>PHOSPHORYLATION [LARGE SCALE ANALYSIS] AT THR-33; SER-278 AND THR-285</scope>
    <scope>IDENTIFICATION BY MASS SPECTROMETRY [LARGE SCALE ANALYSIS]</scope>
</reference>
<sequence>MNDPSLLGYPNVGPQQQQQQQQQQHAGLLGKGTPNALQQQLHMNQLTGIPPPGLMNNSDVHTSSNNNSRQLLDQLANGNANMLNMNMDNNNNNNNNNNNNNNNGGGSGVMMNASTAAVNSIGMVPTVGTPVNINVNASNPLLHPHLDDPSLLNNPIWKLQLHLAAVSAQSLGQPNIYARQNAMKKYLATQQAQQAQQQAQQQAQQQVPGPFGPGPQAAPPALQPTDFQQSHIAEASKSLVDCTKQALMEMADTLTDSKTAKKQQPTGDSTPSGTATNSAVSTPLTPKIELFANGKDEANQALLQHKKLSQYSIDEDDDIENRMVMPKDSKYDDQLWHALDLSNLQIFNISANIFKYDFLTRLYLNGNSLTELPAEIKNLSNLRVLDLSHNRLTSLPAELGSCFQLKYFYFFDNMVTTLPWEFGNLCNLQFLGVEGNPLEKQFLKILTEKSVTGLIFYLRDNRPEIPLPHERRFIEINTDGEPQREYDSLQQSTEHLATDLAKRTFTVLSYNTLCQHYATPKMYRYTPSWALSWDYRRNKLKEQILSYDSDLLCLQEVESKTFEEYWVPLLDKHGYTGIFHAKARAKTMHSKDSKKVDGCCIFFKRDQFKLITKDAMDFSGAWMKHKKFQRTEDYLNRAMNKDNVALFLKLQHIPSGDTIWAVTTHLHWDPKFNDVKTFQVGVLLDHLETLLKEETSHNFRQDIKKFPVLICGDFNSYINSAVYELINTGRVQIHQEGNGRDFGYMSEKNFSHNLALKSSYNCIGELPFTNFTPSFTDVIDYIWFSTHALRVRGLLGEVDPEYVSKFIGFPNDKFPSDHIPLLARFEFMKTNTGSKKV</sequence>
<keyword id="KW-0002">3D-structure</keyword>
<keyword id="KW-0010">Activator</keyword>
<keyword id="KW-0963">Cytoplasm</keyword>
<keyword id="KW-0269">Exonuclease</keyword>
<keyword id="KW-0378">Hydrolase</keyword>
<keyword id="KW-0433">Leucine-rich repeat</keyword>
<keyword id="KW-0460">Magnesium</keyword>
<keyword id="KW-0479">Metal-binding</keyword>
<keyword id="KW-0540">Nuclease</keyword>
<keyword id="KW-0539">Nucleus</keyword>
<keyword id="KW-0597">Phosphoprotein</keyword>
<keyword id="KW-1185">Reference proteome</keyword>
<keyword id="KW-0677">Repeat</keyword>
<keyword id="KW-0678">Repressor</keyword>
<keyword id="KW-0694">RNA-binding</keyword>
<keyword id="KW-0804">Transcription</keyword>
<keyword id="KW-0805">Transcription regulation</keyword>
<name>CCR4_YEAST</name>
<evidence type="ECO:0000250" key="1">
    <source>
        <dbReference type="UniProtKB" id="O95551"/>
    </source>
</evidence>
<evidence type="ECO:0000256" key="2">
    <source>
        <dbReference type="SAM" id="MobiDB-lite"/>
    </source>
</evidence>
<evidence type="ECO:0000269" key="3">
    <source>
    </source>
</evidence>
<evidence type="ECO:0000269" key="4">
    <source>
    </source>
</evidence>
<evidence type="ECO:0000269" key="5">
    <source>
    </source>
</evidence>
<evidence type="ECO:0000269" key="6">
    <source>
    </source>
</evidence>
<evidence type="ECO:0000269" key="7">
    <source>
    </source>
</evidence>
<evidence type="ECO:0000269" key="8">
    <source>
    </source>
</evidence>
<evidence type="ECO:0000269" key="9">
    <source>
    </source>
</evidence>
<evidence type="ECO:0000305" key="10"/>
<evidence type="ECO:0007744" key="11">
    <source>
    </source>
</evidence>
<evidence type="ECO:0007744" key="12">
    <source>
    </source>
</evidence>
<evidence type="ECO:0007744" key="13">
    <source>
    </source>
</evidence>
<evidence type="ECO:0007829" key="14">
    <source>
        <dbReference type="PDB" id="4B8C"/>
    </source>
</evidence>
<comment type="function">
    <text evidence="4 6 7 9">Acts as a catalytic component of the CCR4-NOT core complex, which in the nucleus seems to be a general transcription factor, and in the cytoplasm the major mRNA deadenylase involved in mRNA turnover. CCR4 has 3'-5' RNase activity with a strong preference for polyadenylated substrates and also low exonuclease activity towards single-stranded DNA. Discovered because of its role in the control of ADH2 gene expression. It is required for the expression of genes involved in non-fermentative growth and it mediates or is required for the action of the SPT6 and SPT10 genes.</text>
</comment>
<comment type="catalytic activity">
    <reaction>
        <text>Exonucleolytic cleavage of poly(A) to 5'-AMP.</text>
        <dbReference type="EC" id="3.1.13.4"/>
    </reaction>
</comment>
<comment type="cofactor">
    <cofactor>
        <name>Mg(2+)</name>
        <dbReference type="ChEBI" id="CHEBI:18420"/>
    </cofactor>
</comment>
<comment type="subunit">
    <text evidence="3 5 9">Subunit of the 1.0 MDa CCR4-NOT core complex that contains CCR4, CAF1, NOT1, NOT2, NOT3, NOT4, NOT5, CAF40 and CAF130. In the complex interacts with NOT1. The core complex probably is part of a less characterized 1.9 MDa CCR4-NOT complex.</text>
</comment>
<comment type="interaction">
    <interactant intactId="EBI-4396">
        <id>P31384</id>
    </interactant>
    <interactant intactId="EBI-28306">
        <id>P53829</id>
        <label>CAF40</label>
    </interactant>
    <organismsDiffer>false</organismsDiffer>
    <experiments>9</experiments>
</comment>
<comment type="interaction">
    <interactant intactId="EBI-4396">
        <id>P31384</id>
    </interactant>
    <interactant intactId="EBI-12139">
        <id>P25655</id>
        <label>CDC39</label>
    </interactant>
    <organismsDiffer>false</organismsDiffer>
    <experiments>8</experiments>
</comment>
<comment type="interaction">
    <interactant intactId="EBI-4396">
        <id>P31384</id>
    </interactant>
    <interactant intactId="EBI-12174">
        <id>P34909</id>
        <label>MOT2</label>
    </interactant>
    <organismsDiffer>false</organismsDiffer>
    <experiments>4</experiments>
</comment>
<comment type="interaction">
    <interactant intactId="EBI-4396">
        <id>P31384</id>
    </interactant>
    <interactant intactId="EBI-2052996">
        <id>P39016</id>
        <label>MPT5</label>
    </interactant>
    <organismsDiffer>false</organismsDiffer>
    <experiments>2</experiments>
</comment>
<comment type="interaction">
    <interactant intactId="EBI-4396">
        <id>P31384</id>
    </interactant>
    <interactant intactId="EBI-12184">
        <id>Q12514</id>
        <label>NOT5</label>
    </interactant>
    <organismsDiffer>false</organismsDiffer>
    <experiments>3</experiments>
</comment>
<comment type="interaction">
    <interactant intactId="EBI-4396">
        <id>P31384</id>
    </interactant>
    <interactant intactId="EBI-13629">
        <id>P39008</id>
        <label>POP2</label>
    </interactant>
    <organismsDiffer>false</organismsDiffer>
    <experiments>10</experiments>
</comment>
<comment type="interaction">
    <interactant intactId="EBI-4396">
        <id>P31384</id>
    </interactant>
    <interactant intactId="EBI-13914">
        <id>Q01939</id>
        <label>RPT6</label>
    </interactant>
    <organismsDiffer>false</organismsDiffer>
    <experiments>3</experiments>
</comment>
<comment type="subcellular location">
    <subcellularLocation>
        <location evidence="4">Cytoplasm</location>
    </subcellularLocation>
    <subcellularLocation>
        <location evidence="4">Nucleus</location>
    </subcellularLocation>
</comment>
<comment type="domain">
    <text>The 169 C-terminal residues are important for deadenylase activity.</text>
</comment>
<comment type="miscellaneous">
    <text evidence="8">Present with 2780 molecules/cell in log phase SD medium.</text>
</comment>
<comment type="similarity">
    <text evidence="10">Belongs to the CCR4/nocturin family.</text>
</comment>
<accession>P31384</accession>
<accession>D6VPJ7</accession>
<proteinExistence type="evidence at protein level"/>